<dbReference type="EC" id="3.5.1.5" evidence="1"/>
<dbReference type="EMBL" id="AF056189">
    <property type="protein sequence ID" value="AAC61500.1"/>
    <property type="molecule type" value="Genomic_DNA"/>
</dbReference>
<dbReference type="RefSeq" id="WP_006042764.1">
    <property type="nucleotide sequence ID" value="NZ_CH724168.1"/>
</dbReference>
<dbReference type="SMR" id="O87400"/>
<dbReference type="STRING" id="59931.WH7805_09819"/>
<dbReference type="eggNOG" id="COG0831">
    <property type="taxonomic scope" value="Bacteria"/>
</dbReference>
<dbReference type="OrthoDB" id="9793527at2"/>
<dbReference type="PhylomeDB" id="O87400"/>
<dbReference type="UniPathway" id="UPA00258">
    <property type="reaction ID" value="UER00370"/>
</dbReference>
<dbReference type="GO" id="GO:0005737">
    <property type="term" value="C:cytoplasm"/>
    <property type="evidence" value="ECO:0007669"/>
    <property type="project" value="UniProtKB-SubCell"/>
</dbReference>
<dbReference type="GO" id="GO:0016151">
    <property type="term" value="F:nickel cation binding"/>
    <property type="evidence" value="ECO:0007669"/>
    <property type="project" value="InterPro"/>
</dbReference>
<dbReference type="GO" id="GO:0009039">
    <property type="term" value="F:urease activity"/>
    <property type="evidence" value="ECO:0007669"/>
    <property type="project" value="UniProtKB-UniRule"/>
</dbReference>
<dbReference type="GO" id="GO:0043419">
    <property type="term" value="P:urea catabolic process"/>
    <property type="evidence" value="ECO:0007669"/>
    <property type="project" value="UniProtKB-UniRule"/>
</dbReference>
<dbReference type="CDD" id="cd00390">
    <property type="entry name" value="Urease_gamma"/>
    <property type="match status" value="1"/>
</dbReference>
<dbReference type="Gene3D" id="3.30.280.10">
    <property type="entry name" value="Urease, gamma-like subunit"/>
    <property type="match status" value="1"/>
</dbReference>
<dbReference type="HAMAP" id="MF_00739">
    <property type="entry name" value="Urease_gamma"/>
    <property type="match status" value="1"/>
</dbReference>
<dbReference type="InterPro" id="IPR012010">
    <property type="entry name" value="Urease_gamma"/>
</dbReference>
<dbReference type="InterPro" id="IPR002026">
    <property type="entry name" value="Urease_gamma/gamma-beta_su"/>
</dbReference>
<dbReference type="InterPro" id="IPR036463">
    <property type="entry name" value="Urease_gamma_sf"/>
</dbReference>
<dbReference type="InterPro" id="IPR050069">
    <property type="entry name" value="Urease_subunit"/>
</dbReference>
<dbReference type="NCBIfam" id="NF009712">
    <property type="entry name" value="PRK13241.1"/>
    <property type="match status" value="1"/>
</dbReference>
<dbReference type="NCBIfam" id="TIGR00193">
    <property type="entry name" value="urease_gam"/>
    <property type="match status" value="1"/>
</dbReference>
<dbReference type="PANTHER" id="PTHR33569">
    <property type="entry name" value="UREASE"/>
    <property type="match status" value="1"/>
</dbReference>
<dbReference type="PANTHER" id="PTHR33569:SF1">
    <property type="entry name" value="UREASE"/>
    <property type="match status" value="1"/>
</dbReference>
<dbReference type="Pfam" id="PF00547">
    <property type="entry name" value="Urease_gamma"/>
    <property type="match status" value="1"/>
</dbReference>
<dbReference type="PIRSF" id="PIRSF001223">
    <property type="entry name" value="Urease_gamma"/>
    <property type="match status" value="1"/>
</dbReference>
<dbReference type="SUPFAM" id="SSF54111">
    <property type="entry name" value="Urease, gamma-subunit"/>
    <property type="match status" value="1"/>
</dbReference>
<gene>
    <name evidence="1" type="primary">ureA</name>
</gene>
<comment type="catalytic activity">
    <reaction evidence="1 2">
        <text>urea + 2 H2O + H(+) = hydrogencarbonate + 2 NH4(+)</text>
        <dbReference type="Rhea" id="RHEA:20557"/>
        <dbReference type="ChEBI" id="CHEBI:15377"/>
        <dbReference type="ChEBI" id="CHEBI:15378"/>
        <dbReference type="ChEBI" id="CHEBI:16199"/>
        <dbReference type="ChEBI" id="CHEBI:17544"/>
        <dbReference type="ChEBI" id="CHEBI:28938"/>
        <dbReference type="EC" id="3.5.1.5"/>
    </reaction>
</comment>
<comment type="biophysicochemical properties">
    <kinetics>
        <KM evidence="2">0.232 mM for urea</KM>
        <Vmax evidence="2">0.0013 mmol/min/mg enzyme</Vmax>
    </kinetics>
    <phDependence>
        <text evidence="2">Optimum pH is 8.6.</text>
    </phDependence>
    <temperatureDependence>
        <text evidence="2">Optimum temperature is 45 degrees Celsius.</text>
    </temperatureDependence>
</comment>
<comment type="pathway">
    <text evidence="1">Nitrogen metabolism; urea degradation; CO(2) and NH(3) from urea (urease route): step 1/1.</text>
</comment>
<comment type="subunit">
    <text evidence="1">Heterotrimer of UreA (gamma), UreB (beta) and UreC (alpha) subunits. Three heterotrimers associate to form the active enzyme.</text>
</comment>
<comment type="subcellular location">
    <subcellularLocation>
        <location evidence="1">Cytoplasm</location>
    </subcellularLocation>
</comment>
<comment type="similarity">
    <text evidence="1">Belongs to the urease gamma subunit family.</text>
</comment>
<evidence type="ECO:0000255" key="1">
    <source>
        <dbReference type="HAMAP-Rule" id="MF_00739"/>
    </source>
</evidence>
<evidence type="ECO:0000269" key="2">
    <source>
    </source>
</evidence>
<name>URE3_SYNPV</name>
<keyword id="KW-0963">Cytoplasm</keyword>
<keyword id="KW-0378">Hydrolase</keyword>
<sequence>MHLSPQEKDKLLIVTAALLAERRLNRGLKLNHPEAVAWLSFLVLEGARDGKSVAELMQEGTTWLSRNQVMDGIPELVQEVQIEAVFPDGTKLVTLHDPIR</sequence>
<feature type="chain" id="PRO_0000098053" description="Urease subunit gamma">
    <location>
        <begin position="1"/>
        <end position="100"/>
    </location>
</feature>
<protein>
    <recommendedName>
        <fullName evidence="1">Urease subunit gamma</fullName>
        <ecNumber evidence="1">3.5.1.5</ecNumber>
    </recommendedName>
    <alternativeName>
        <fullName evidence="1">Urea amidohydrolase subunit gamma</fullName>
    </alternativeName>
</protein>
<organism>
    <name type="scientific">Synechococcus sp. (strain WH7805)</name>
    <dbReference type="NCBI Taxonomy" id="59931"/>
    <lineage>
        <taxon>Bacteria</taxon>
        <taxon>Bacillati</taxon>
        <taxon>Cyanobacteriota</taxon>
        <taxon>Cyanophyceae</taxon>
        <taxon>Synechococcales</taxon>
        <taxon>Synechococcaceae</taxon>
        <taxon>Synechococcus</taxon>
    </lineage>
</organism>
<accession>O87400</accession>
<proteinExistence type="evidence at protein level"/>
<reference key="1">
    <citation type="journal article" date="1999" name="Microbiology">
        <title>The marine cyanobacterium Synechococcus sp. WH7805 requires urease (urea amidohydrolase, EC 3.5.1.5) to utilize urea as a nitrogen source: molecular-genetic and biochemical analysis of the enzyme.</title>
        <authorList>
            <person name="Collier J.L."/>
            <person name="Brahamsha B."/>
            <person name="Palenik B."/>
        </authorList>
    </citation>
    <scope>NUCLEOTIDE SEQUENCE [GENOMIC DNA]</scope>
    <scope>CATALYTIC ACTIVITY</scope>
    <scope>BIOPHYSICOCHEMICAL PROPERTIES</scope>
</reference>